<protein>
    <recommendedName>
        <fullName evidence="1">tRNA dimethylallyltransferase</fullName>
        <ecNumber evidence="1">2.5.1.75</ecNumber>
    </recommendedName>
    <alternativeName>
        <fullName evidence="1">Dimethylallyl diphosphate:tRNA dimethylallyltransferase</fullName>
        <shortName evidence="1">DMAPP:tRNA dimethylallyltransferase</shortName>
        <shortName evidence="1">DMATase</shortName>
    </alternativeName>
    <alternativeName>
        <fullName evidence="1">Isopentenyl-diphosphate:tRNA isopentenyltransferase</fullName>
        <shortName evidence="1">IPP transferase</shortName>
        <shortName evidence="1">IPPT</shortName>
        <shortName evidence="1">IPTase</shortName>
    </alternativeName>
</protein>
<sequence>MRLETQALVPYPVRFDRSHHDALVVLGATATGKTALAVALAQKYQGEIISADSRQVYRGLDVGTGKDLALYGSVPYHLIDVCDPYEEYNVFRFQQAVYGIVPSILRAHKVPIIVGGTGLYLDAVLRQYALVPVERNQALRASLRGASLSHMRAVYFSLKDSHAVHNKTDLEDPARLMRAIEIAVFHATHPELLQQARETRPMMRAKVYGIQYPRSMLRARIRARLEQRIRGGLIEEVAALHKGGVSWQRLEYFGLEYRFTAQYLQGIIATRDEYVDLLFRAISRFAKRQETWFRRMQRLGVKIHWLVHTENGFVLR</sequence>
<comment type="function">
    <text evidence="1">Catalyzes the transfer of a dimethylallyl group onto the adenine at position 37 in tRNAs that read codons beginning with uridine, leading to the formation of N6-(dimethylallyl)adenosine (i(6)A).</text>
</comment>
<comment type="catalytic activity">
    <reaction evidence="1">
        <text>adenosine(37) in tRNA + dimethylallyl diphosphate = N(6)-dimethylallyladenosine(37) in tRNA + diphosphate</text>
        <dbReference type="Rhea" id="RHEA:26482"/>
        <dbReference type="Rhea" id="RHEA-COMP:10162"/>
        <dbReference type="Rhea" id="RHEA-COMP:10375"/>
        <dbReference type="ChEBI" id="CHEBI:33019"/>
        <dbReference type="ChEBI" id="CHEBI:57623"/>
        <dbReference type="ChEBI" id="CHEBI:74411"/>
        <dbReference type="ChEBI" id="CHEBI:74415"/>
        <dbReference type="EC" id="2.5.1.75"/>
    </reaction>
</comment>
<comment type="cofactor">
    <cofactor evidence="1">
        <name>Mg(2+)</name>
        <dbReference type="ChEBI" id="CHEBI:18420"/>
    </cofactor>
</comment>
<comment type="subunit">
    <text evidence="1">Monomer.</text>
</comment>
<comment type="similarity">
    <text evidence="1">Belongs to the IPP transferase family.</text>
</comment>
<proteinExistence type="inferred from homology"/>
<accession>O83644</accession>
<name>MIAA_TREPA</name>
<dbReference type="EC" id="2.5.1.75" evidence="1"/>
<dbReference type="EMBL" id="AE000520">
    <property type="protein sequence ID" value="AAC65611.1"/>
    <property type="molecule type" value="Genomic_DNA"/>
</dbReference>
<dbReference type="PIR" id="B71301">
    <property type="entry name" value="B71301"/>
</dbReference>
<dbReference type="RefSeq" id="WP_010882082.1">
    <property type="nucleotide sequence ID" value="NC_021490.2"/>
</dbReference>
<dbReference type="SMR" id="O83644"/>
<dbReference type="IntAct" id="O83644">
    <property type="interactions" value="4"/>
</dbReference>
<dbReference type="STRING" id="243276.TP_0637"/>
<dbReference type="EnsemblBacteria" id="AAC65611">
    <property type="protein sequence ID" value="AAC65611"/>
    <property type="gene ID" value="TP_0637"/>
</dbReference>
<dbReference type="GeneID" id="93876403"/>
<dbReference type="KEGG" id="tpa:TP_0637"/>
<dbReference type="KEGG" id="tpw:TPANIC_0637"/>
<dbReference type="eggNOG" id="COG0324">
    <property type="taxonomic scope" value="Bacteria"/>
</dbReference>
<dbReference type="HOGENOM" id="CLU_032616_0_1_12"/>
<dbReference type="OrthoDB" id="9776390at2"/>
<dbReference type="Proteomes" id="UP000000811">
    <property type="component" value="Chromosome"/>
</dbReference>
<dbReference type="GO" id="GO:0005524">
    <property type="term" value="F:ATP binding"/>
    <property type="evidence" value="ECO:0007669"/>
    <property type="project" value="UniProtKB-UniRule"/>
</dbReference>
<dbReference type="GO" id="GO:0052381">
    <property type="term" value="F:tRNA dimethylallyltransferase activity"/>
    <property type="evidence" value="ECO:0007669"/>
    <property type="project" value="UniProtKB-UniRule"/>
</dbReference>
<dbReference type="GO" id="GO:0006400">
    <property type="term" value="P:tRNA modification"/>
    <property type="evidence" value="ECO:0007669"/>
    <property type="project" value="TreeGrafter"/>
</dbReference>
<dbReference type="Gene3D" id="3.40.50.300">
    <property type="entry name" value="P-loop containing nucleotide triphosphate hydrolases"/>
    <property type="match status" value="1"/>
</dbReference>
<dbReference type="HAMAP" id="MF_00185">
    <property type="entry name" value="IPP_trans"/>
    <property type="match status" value="1"/>
</dbReference>
<dbReference type="InterPro" id="IPR039657">
    <property type="entry name" value="Dimethylallyltransferase"/>
</dbReference>
<dbReference type="InterPro" id="IPR018022">
    <property type="entry name" value="IPT"/>
</dbReference>
<dbReference type="InterPro" id="IPR027417">
    <property type="entry name" value="P-loop_NTPase"/>
</dbReference>
<dbReference type="NCBIfam" id="TIGR00174">
    <property type="entry name" value="miaA"/>
    <property type="match status" value="1"/>
</dbReference>
<dbReference type="PANTHER" id="PTHR11088">
    <property type="entry name" value="TRNA DIMETHYLALLYLTRANSFERASE"/>
    <property type="match status" value="1"/>
</dbReference>
<dbReference type="PANTHER" id="PTHR11088:SF60">
    <property type="entry name" value="TRNA DIMETHYLALLYLTRANSFERASE"/>
    <property type="match status" value="1"/>
</dbReference>
<dbReference type="Pfam" id="PF01715">
    <property type="entry name" value="IPPT"/>
    <property type="match status" value="1"/>
</dbReference>
<dbReference type="SUPFAM" id="SSF52540">
    <property type="entry name" value="P-loop containing nucleoside triphosphate hydrolases"/>
    <property type="match status" value="1"/>
</dbReference>
<reference key="1">
    <citation type="journal article" date="1998" name="Science">
        <title>Complete genome sequence of Treponema pallidum, the syphilis spirochete.</title>
        <authorList>
            <person name="Fraser C.M."/>
            <person name="Norris S.J."/>
            <person name="Weinstock G.M."/>
            <person name="White O."/>
            <person name="Sutton G.G."/>
            <person name="Dodson R.J."/>
            <person name="Gwinn M.L."/>
            <person name="Hickey E.K."/>
            <person name="Clayton R.A."/>
            <person name="Ketchum K.A."/>
            <person name="Sodergren E."/>
            <person name="Hardham J.M."/>
            <person name="McLeod M.P."/>
            <person name="Salzberg S.L."/>
            <person name="Peterson J.D."/>
            <person name="Khalak H.G."/>
            <person name="Richardson D.L."/>
            <person name="Howell J.K."/>
            <person name="Chidambaram M."/>
            <person name="Utterback T.R."/>
            <person name="McDonald L.A."/>
            <person name="Artiach P."/>
            <person name="Bowman C."/>
            <person name="Cotton M.D."/>
            <person name="Fujii C."/>
            <person name="Garland S.A."/>
            <person name="Hatch B."/>
            <person name="Horst K."/>
            <person name="Roberts K.M."/>
            <person name="Sandusky M."/>
            <person name="Weidman J.F."/>
            <person name="Smith H.O."/>
            <person name="Venter J.C."/>
        </authorList>
    </citation>
    <scope>NUCLEOTIDE SEQUENCE [LARGE SCALE GENOMIC DNA]</scope>
    <source>
        <strain>Nichols</strain>
    </source>
</reference>
<feature type="chain" id="PRO_0000164001" description="tRNA dimethylallyltransferase">
    <location>
        <begin position="1"/>
        <end position="316"/>
    </location>
</feature>
<feature type="region of interest" description="Interaction with substrate tRNA" evidence="1">
    <location>
        <begin position="52"/>
        <end position="55"/>
    </location>
</feature>
<feature type="binding site" evidence="1">
    <location>
        <begin position="27"/>
        <end position="34"/>
    </location>
    <ligand>
        <name>ATP</name>
        <dbReference type="ChEBI" id="CHEBI:30616"/>
    </ligand>
</feature>
<feature type="binding site" evidence="1">
    <location>
        <begin position="29"/>
        <end position="34"/>
    </location>
    <ligand>
        <name>substrate</name>
    </ligand>
</feature>
<feature type="site" description="Interaction with substrate tRNA" evidence="1">
    <location>
        <position position="117"/>
    </location>
</feature>
<evidence type="ECO:0000255" key="1">
    <source>
        <dbReference type="HAMAP-Rule" id="MF_00185"/>
    </source>
</evidence>
<organism>
    <name type="scientific">Treponema pallidum (strain Nichols)</name>
    <dbReference type="NCBI Taxonomy" id="243276"/>
    <lineage>
        <taxon>Bacteria</taxon>
        <taxon>Pseudomonadati</taxon>
        <taxon>Spirochaetota</taxon>
        <taxon>Spirochaetia</taxon>
        <taxon>Spirochaetales</taxon>
        <taxon>Treponemataceae</taxon>
        <taxon>Treponema</taxon>
    </lineage>
</organism>
<gene>
    <name evidence="1" type="primary">miaA</name>
    <name type="ordered locus">TP_0637</name>
</gene>
<keyword id="KW-0067">ATP-binding</keyword>
<keyword id="KW-0460">Magnesium</keyword>
<keyword id="KW-0547">Nucleotide-binding</keyword>
<keyword id="KW-1185">Reference proteome</keyword>
<keyword id="KW-0808">Transferase</keyword>
<keyword id="KW-0819">tRNA processing</keyword>